<accession>Q60EH4</accession>
<accession>A0A0P0WN59</accession>
<keyword id="KW-1184">Jasmonic acid signaling pathway</keyword>
<keyword id="KW-0611">Plant defense</keyword>
<keyword id="KW-1185">Reference proteome</keyword>
<keyword id="KW-0833">Ubl conjugation pathway</keyword>
<evidence type="ECO:0000250" key="1">
    <source>
        <dbReference type="UniProtKB" id="O04197"/>
    </source>
</evidence>
<evidence type="ECO:0000255" key="2"/>
<evidence type="ECO:0000269" key="3">
    <source>
    </source>
</evidence>
<evidence type="ECO:0000269" key="4">
    <source>
    </source>
</evidence>
<evidence type="ECO:0000269" key="5">
    <source>
    </source>
</evidence>
<evidence type="ECO:0000303" key="6">
    <source>
    </source>
</evidence>
<evidence type="ECO:0000303" key="7">
    <source>
    </source>
</evidence>
<evidence type="ECO:0000305" key="8"/>
<evidence type="ECO:0000312" key="9">
    <source>
        <dbReference type="EMBL" id="AAU90110.1"/>
    </source>
</evidence>
<evidence type="ECO:0000312" key="10">
    <source>
        <dbReference type="EMBL" id="BAF17614.1"/>
    </source>
</evidence>
<evidence type="ECO:0000312" key="11">
    <source>
        <dbReference type="EMBL" id="EEE63917.1"/>
    </source>
</evidence>
<reference key="1">
    <citation type="journal article" date="2005" name="Mol. Genet. Genomics">
        <title>A fine physical map of the rice chromosome 5.</title>
        <authorList>
            <person name="Cheng C.-H."/>
            <person name="Chung M.C."/>
            <person name="Liu S.-M."/>
            <person name="Chen S.-K."/>
            <person name="Kao F.Y."/>
            <person name="Lin S.-J."/>
            <person name="Hsiao S.-H."/>
            <person name="Tseng I.C."/>
            <person name="Hsing Y.-I.C."/>
            <person name="Wu H.-P."/>
            <person name="Chen C.-S."/>
            <person name="Shaw J.-F."/>
            <person name="Wu J."/>
            <person name="Matsumoto T."/>
            <person name="Sasaki T."/>
            <person name="Chen H.-C."/>
            <person name="Chow T.-Y."/>
        </authorList>
    </citation>
    <scope>NUCLEOTIDE SEQUENCE [LARGE SCALE GENOMIC DNA]</scope>
    <source>
        <strain>cv. Nipponbare</strain>
    </source>
</reference>
<reference key="2">
    <citation type="journal article" date="2005" name="Nature">
        <title>The map-based sequence of the rice genome.</title>
        <authorList>
            <consortium name="International rice genome sequencing project (IRGSP)"/>
        </authorList>
    </citation>
    <scope>NUCLEOTIDE SEQUENCE [LARGE SCALE GENOMIC DNA]</scope>
    <source>
        <strain>cv. Nipponbare</strain>
    </source>
</reference>
<reference key="3">
    <citation type="journal article" date="2008" name="Nucleic Acids Res.">
        <title>The rice annotation project database (RAP-DB): 2008 update.</title>
        <authorList>
            <consortium name="The rice annotation project (RAP)"/>
        </authorList>
    </citation>
    <scope>GENOME REANNOTATION</scope>
    <source>
        <strain>cv. Nipponbare</strain>
    </source>
</reference>
<reference key="4">
    <citation type="journal article" date="2013" name="Rice">
        <title>Improvement of the Oryza sativa Nipponbare reference genome using next generation sequence and optical map data.</title>
        <authorList>
            <person name="Kawahara Y."/>
            <person name="de la Bastide M."/>
            <person name="Hamilton J.P."/>
            <person name="Kanamori H."/>
            <person name="McCombie W.R."/>
            <person name="Ouyang S."/>
            <person name="Schwartz D.C."/>
            <person name="Tanaka T."/>
            <person name="Wu J."/>
            <person name="Zhou S."/>
            <person name="Childs K.L."/>
            <person name="Davidson R.M."/>
            <person name="Lin H."/>
            <person name="Quesada-Ocampo L."/>
            <person name="Vaillancourt B."/>
            <person name="Sakai H."/>
            <person name="Lee S.S."/>
            <person name="Kim J."/>
            <person name="Numa H."/>
            <person name="Itoh T."/>
            <person name="Buell C.R."/>
            <person name="Matsumoto T."/>
        </authorList>
    </citation>
    <scope>GENOME REANNOTATION</scope>
    <source>
        <strain>cv. Nipponbare</strain>
    </source>
</reference>
<reference key="5">
    <citation type="journal article" date="2005" name="PLoS Biol.">
        <title>The genomes of Oryza sativa: a history of duplications.</title>
        <authorList>
            <person name="Yu J."/>
            <person name="Wang J."/>
            <person name="Lin W."/>
            <person name="Li S."/>
            <person name="Li H."/>
            <person name="Zhou J."/>
            <person name="Ni P."/>
            <person name="Dong W."/>
            <person name="Hu S."/>
            <person name="Zeng C."/>
            <person name="Zhang J."/>
            <person name="Zhang Y."/>
            <person name="Li R."/>
            <person name="Xu Z."/>
            <person name="Li S."/>
            <person name="Li X."/>
            <person name="Zheng H."/>
            <person name="Cong L."/>
            <person name="Lin L."/>
            <person name="Yin J."/>
            <person name="Geng J."/>
            <person name="Li G."/>
            <person name="Shi J."/>
            <person name="Liu J."/>
            <person name="Lv H."/>
            <person name="Li J."/>
            <person name="Wang J."/>
            <person name="Deng Y."/>
            <person name="Ran L."/>
            <person name="Shi X."/>
            <person name="Wang X."/>
            <person name="Wu Q."/>
            <person name="Li C."/>
            <person name="Ren X."/>
            <person name="Wang J."/>
            <person name="Wang X."/>
            <person name="Li D."/>
            <person name="Liu D."/>
            <person name="Zhang X."/>
            <person name="Ji Z."/>
            <person name="Zhao W."/>
            <person name="Sun Y."/>
            <person name="Zhang Z."/>
            <person name="Bao J."/>
            <person name="Han Y."/>
            <person name="Dong L."/>
            <person name="Ji J."/>
            <person name="Chen P."/>
            <person name="Wu S."/>
            <person name="Liu J."/>
            <person name="Xiao Y."/>
            <person name="Bu D."/>
            <person name="Tan J."/>
            <person name="Yang L."/>
            <person name="Ye C."/>
            <person name="Zhang J."/>
            <person name="Xu J."/>
            <person name="Zhou Y."/>
            <person name="Yu Y."/>
            <person name="Zhang B."/>
            <person name="Zhuang S."/>
            <person name="Wei H."/>
            <person name="Liu B."/>
            <person name="Lei M."/>
            <person name="Yu H."/>
            <person name="Li Y."/>
            <person name="Xu H."/>
            <person name="Wei S."/>
            <person name="He X."/>
            <person name="Fang L."/>
            <person name="Zhang Z."/>
            <person name="Zhang Y."/>
            <person name="Huang X."/>
            <person name="Su Z."/>
            <person name="Tong W."/>
            <person name="Li J."/>
            <person name="Tong Z."/>
            <person name="Li S."/>
            <person name="Ye J."/>
            <person name="Wang L."/>
            <person name="Fang L."/>
            <person name="Lei T."/>
            <person name="Chen C.-S."/>
            <person name="Chen H.-C."/>
            <person name="Xu Z."/>
            <person name="Li H."/>
            <person name="Huang H."/>
            <person name="Zhang F."/>
            <person name="Xu H."/>
            <person name="Li N."/>
            <person name="Zhao C."/>
            <person name="Li S."/>
            <person name="Dong L."/>
            <person name="Huang Y."/>
            <person name="Li L."/>
            <person name="Xi Y."/>
            <person name="Qi Q."/>
            <person name="Li W."/>
            <person name="Zhang B."/>
            <person name="Hu W."/>
            <person name="Zhang Y."/>
            <person name="Tian X."/>
            <person name="Jiao Y."/>
            <person name="Liang X."/>
            <person name="Jin J."/>
            <person name="Gao L."/>
            <person name="Zheng W."/>
            <person name="Hao B."/>
            <person name="Liu S.-M."/>
            <person name="Wang W."/>
            <person name="Yuan L."/>
            <person name="Cao M."/>
            <person name="McDermott J."/>
            <person name="Samudrala R."/>
            <person name="Wang J."/>
            <person name="Wong G.K.-S."/>
            <person name="Yang H."/>
        </authorList>
    </citation>
    <scope>NUCLEOTIDE SEQUENCE [LARGE SCALE GENOMIC DNA]</scope>
    <source>
        <strain>cv. Nipponbare</strain>
    </source>
</reference>
<reference key="6">
    <citation type="journal article" date="2003" name="Science">
        <title>Collection, mapping, and annotation of over 28,000 cDNA clones from japonica rice.</title>
        <authorList>
            <consortium name="The rice full-length cDNA consortium"/>
        </authorList>
    </citation>
    <scope>NUCLEOTIDE SEQUENCE [LARGE SCALE MRNA]</scope>
    <source>
        <strain>cv. Nipponbare</strain>
    </source>
</reference>
<reference key="7">
    <citation type="journal article" date="2012" name="Plant Cell Physiol.">
        <title>Involvement of OsJAZ8 in jasmonate-induced resistance to bacterial blight in rice.</title>
        <authorList>
            <person name="Yamada S."/>
            <person name="Kano A."/>
            <person name="Tamaoki D."/>
            <person name="Miyamoto A."/>
            <person name="Shishido H."/>
            <person name="Miyoshi S."/>
            <person name="Taniguchi S."/>
            <person name="Akimitsu K."/>
            <person name="Gomi K."/>
        </authorList>
    </citation>
    <scope>FUNCTION</scope>
    <scope>INTERACTION WITH TIFY10C/JAZ8</scope>
</reference>
<reference key="8">
    <citation type="journal article" date="2012" name="Proc. Natl. Acad. Sci. U.S.A.">
        <title>Plant hormone jasmonate prioritizes defense over growth by interfering with gibberellin signaling cascade.</title>
        <authorList>
            <person name="Yang D.L."/>
            <person name="Yao J."/>
            <person name="Mei C.S."/>
            <person name="Tong X.H."/>
            <person name="Zeng L.J."/>
            <person name="Li Q."/>
            <person name="Xiao L.T."/>
            <person name="Sun T.P."/>
            <person name="Li J."/>
            <person name="Deng X.W."/>
            <person name="Lee C.M."/>
            <person name="Thomashow M.F."/>
            <person name="Yang Y."/>
            <person name="He Z."/>
            <person name="He S.Y."/>
        </authorList>
    </citation>
    <scope>FUNCTION</scope>
</reference>
<reference key="9">
    <citation type="journal article" date="2013" name="PLoS ONE">
        <title>Oryza sativa COI homologues restore jasmonate signal transduction in Arabidopsis coi1-1 mutants.</title>
        <authorList>
            <person name="Lee H.Y."/>
            <person name="Seo J.S."/>
            <person name="Cho J.H."/>
            <person name="Jung H."/>
            <person name="Kim J.K."/>
            <person name="Lee J.S."/>
            <person name="Rhee S."/>
            <person name="Do Choi Y."/>
        </authorList>
    </citation>
    <scope>FUNCTION</scope>
    <scope>INTERACTION WITH TIFY3/JAZ1; TIFY6A/JAZ3; TIFY6B/JAZ4; TIFY10A/JAZ6; TIFY10B/JAZ7; TIFY10C/JAZ8; TIFY11A/JAZ9; TIFY11B/JAZ10; TIFY11C/JAZ11 AND TIFY11D/JAZ12</scope>
    <scope>TISSUE SPECIFICITY</scope>
</reference>
<name>COI1B_ORYSJ</name>
<feature type="chain" id="PRO_0000434868" description="Coronatine-insensitive protein homolog 1b">
    <location>
        <begin position="1"/>
        <end position="597"/>
    </location>
</feature>
<feature type="domain" description="F-box" evidence="2">
    <location>
        <begin position="22"/>
        <end position="64"/>
    </location>
</feature>
<feature type="binding site" evidence="1">
    <location>
        <position position="92"/>
    </location>
    <ligand>
        <name>jasmonate</name>
        <dbReference type="ChEBI" id="CHEBI:58431"/>
    </ligand>
</feature>
<feature type="binding site" evidence="1">
    <location>
        <position position="353"/>
    </location>
    <ligand>
        <name>jasmonate</name>
        <dbReference type="ChEBI" id="CHEBI:58431"/>
    </ligand>
</feature>
<feature type="binding site" evidence="1">
    <location>
        <position position="391"/>
    </location>
    <ligand>
        <name>jasmonate</name>
        <dbReference type="ChEBI" id="CHEBI:58431"/>
    </ligand>
</feature>
<feature type="binding site" evidence="1">
    <location>
        <position position="414"/>
    </location>
    <ligand>
        <name>jasmonate</name>
        <dbReference type="ChEBI" id="CHEBI:58431"/>
    </ligand>
</feature>
<feature type="binding site" evidence="1">
    <location>
        <position position="501"/>
    </location>
    <ligand>
        <name>jasmonate</name>
        <dbReference type="ChEBI" id="CHEBI:58431"/>
    </ligand>
</feature>
<feature type="sequence conflict" description="In Ref. 6; AK101514." evidence="8" ref="6">
    <original>P</original>
    <variation>R</variation>
    <location>
        <position position="543"/>
    </location>
</feature>
<comment type="function">
    <text evidence="1 3 5">Involved in jasmonate (JA) signaling. Required for jasmonate signaling in plant defense responses (PubMed:22529386). Can complement Arabidopsis coi1-1 mutant and restore jasmonate signaling (PubMed:23320078). Component of SCF(COI1) E3 ubiquitin ligase complexes, which may mediate the ubiquitination and subsequent proteasomal degradation of target proteins, including TIFY/JAZ family (By similarity).</text>
</comment>
<comment type="subunit">
    <text evidence="4 5">Interacts with TIFY10C/JAZ8 in a coronatine-dependent manner (PubMed:23104764, PubMed:23320078). Interacts with TIFY3/JAZ1, TIFY6A/JAZ3, TIFY6B/JAZ4, TIFY10A/JAZ6, TIFY10B/JAZ7, TIFY11A/JAZ9, TIFY11B/JAZ10, TIFY11C/JAZ11 and TIFY11D/JAZ12 in a coronatine-dependent manner (PubMed:23320078).</text>
</comment>
<comment type="tissue specificity">
    <text evidence="5">Expressed in roots, shoots, leaf sheaths and leaf blades.</text>
</comment>
<comment type="miscellaneous">
    <text evidence="3">Plants silencing COI1A and COI1B show increased plant height and seed length, are hypersensitive to gibberellin, and display reduced sensitivity to inhibition of seedling growth by jasmonate.</text>
</comment>
<organism>
    <name type="scientific">Oryza sativa subsp. japonica</name>
    <name type="common">Rice</name>
    <dbReference type="NCBI Taxonomy" id="39947"/>
    <lineage>
        <taxon>Eukaryota</taxon>
        <taxon>Viridiplantae</taxon>
        <taxon>Streptophyta</taxon>
        <taxon>Embryophyta</taxon>
        <taxon>Tracheophyta</taxon>
        <taxon>Spermatophyta</taxon>
        <taxon>Magnoliopsida</taxon>
        <taxon>Liliopsida</taxon>
        <taxon>Poales</taxon>
        <taxon>Poaceae</taxon>
        <taxon>BOP clade</taxon>
        <taxon>Oryzoideae</taxon>
        <taxon>Oryzeae</taxon>
        <taxon>Oryzinae</taxon>
        <taxon>Oryza</taxon>
        <taxon>Oryza sativa</taxon>
    </lineage>
</organism>
<proteinExistence type="evidence at protein level"/>
<gene>
    <name evidence="7" type="primary">COI1B</name>
    <name evidence="10" type="ordered locus">Os05g0449500</name>
    <name evidence="9" type="ORF">B1122D01.5</name>
    <name evidence="11" type="ORF">OsJ_18742</name>
</gene>
<protein>
    <recommendedName>
        <fullName evidence="8">Coronatine-insensitive protein homolog 1b</fullName>
        <shortName evidence="7">OsCOI1b</shortName>
    </recommendedName>
    <alternativeName>
        <fullName evidence="6">COI1 protein homolog</fullName>
        <shortName evidence="6">OsCOI1H</shortName>
    </alternativeName>
</protein>
<dbReference type="EMBL" id="AC130602">
    <property type="protein sequence ID" value="AAU90110.1"/>
    <property type="molecule type" value="Genomic_DNA"/>
</dbReference>
<dbReference type="EMBL" id="AP008211">
    <property type="protein sequence ID" value="BAF17614.1"/>
    <property type="molecule type" value="Genomic_DNA"/>
</dbReference>
<dbReference type="EMBL" id="AP014961">
    <property type="protein sequence ID" value="BAS94315.1"/>
    <property type="molecule type" value="Genomic_DNA"/>
</dbReference>
<dbReference type="EMBL" id="CM000142">
    <property type="protein sequence ID" value="EEE63917.1"/>
    <property type="molecule type" value="Genomic_DNA"/>
</dbReference>
<dbReference type="EMBL" id="AK101514">
    <property type="status" value="NOT_ANNOTATED_CDS"/>
    <property type="molecule type" value="mRNA"/>
</dbReference>
<dbReference type="RefSeq" id="XP_015639870.1">
    <property type="nucleotide sequence ID" value="XM_015784384.1"/>
</dbReference>
<dbReference type="SMR" id="Q60EH4"/>
<dbReference type="FunCoup" id="Q60EH4">
    <property type="interactions" value="710"/>
</dbReference>
<dbReference type="STRING" id="39947.Q60EH4"/>
<dbReference type="PaxDb" id="39947-Q60EH4"/>
<dbReference type="EnsemblPlants" id="Os05t0449500-01">
    <property type="protein sequence ID" value="Os05t0449500-01"/>
    <property type="gene ID" value="Os05g0449500"/>
</dbReference>
<dbReference type="Gramene" id="Os05t0449500-01">
    <property type="protein sequence ID" value="Os05t0449500-01"/>
    <property type="gene ID" value="Os05g0449500"/>
</dbReference>
<dbReference type="KEGG" id="dosa:Os05g0449500"/>
<dbReference type="eggNOG" id="KOG1947">
    <property type="taxonomic scope" value="Eukaryota"/>
</dbReference>
<dbReference type="HOGENOM" id="CLU_022456_1_0_1"/>
<dbReference type="InParanoid" id="Q60EH4"/>
<dbReference type="OMA" id="WVFEIAE"/>
<dbReference type="OrthoDB" id="550575at2759"/>
<dbReference type="PlantReactome" id="R-OSA-6787011">
    <property type="pathway name" value="Jasmonic acid signaling"/>
</dbReference>
<dbReference type="Proteomes" id="UP000000763">
    <property type="component" value="Chromosome 5"/>
</dbReference>
<dbReference type="Proteomes" id="UP000007752">
    <property type="component" value="Chromosome 5"/>
</dbReference>
<dbReference type="Proteomes" id="UP000059680">
    <property type="component" value="Chromosome 5"/>
</dbReference>
<dbReference type="GO" id="GO:0019005">
    <property type="term" value="C:SCF ubiquitin ligase complex"/>
    <property type="evidence" value="ECO:0000318"/>
    <property type="project" value="GO_Central"/>
</dbReference>
<dbReference type="GO" id="GO:0006952">
    <property type="term" value="P:defense response"/>
    <property type="evidence" value="ECO:0007669"/>
    <property type="project" value="UniProtKB-KW"/>
</dbReference>
<dbReference type="GO" id="GO:2000022">
    <property type="term" value="P:regulation of jasmonic acid mediated signaling pathway"/>
    <property type="evidence" value="ECO:0000315"/>
    <property type="project" value="UniProtKB"/>
</dbReference>
<dbReference type="GO" id="GO:0031146">
    <property type="term" value="P:SCF-dependent proteasomal ubiquitin-dependent protein catabolic process"/>
    <property type="evidence" value="ECO:0000318"/>
    <property type="project" value="GO_Central"/>
</dbReference>
<dbReference type="CDD" id="cd22159">
    <property type="entry name" value="F-box_AtTIR1-like"/>
    <property type="match status" value="1"/>
</dbReference>
<dbReference type="FunFam" id="3.80.10.10:FF:000124">
    <property type="entry name" value="Coronatine-insensitive protein 1"/>
    <property type="match status" value="1"/>
</dbReference>
<dbReference type="FunFam" id="1.20.1280.50:FF:000034">
    <property type="entry name" value="Coronatine-insensitive protein homolog 2"/>
    <property type="match status" value="1"/>
</dbReference>
<dbReference type="Gene3D" id="1.20.1280.50">
    <property type="match status" value="1"/>
</dbReference>
<dbReference type="Gene3D" id="3.80.10.10">
    <property type="entry name" value="Ribonuclease Inhibitor"/>
    <property type="match status" value="1"/>
</dbReference>
<dbReference type="InterPro" id="IPR041567">
    <property type="entry name" value="COI1_F-box"/>
</dbReference>
<dbReference type="InterPro" id="IPR036047">
    <property type="entry name" value="F-box-like_dom_sf"/>
</dbReference>
<dbReference type="InterPro" id="IPR006553">
    <property type="entry name" value="Leu-rich_rpt_Cys-con_subtyp"/>
</dbReference>
<dbReference type="InterPro" id="IPR032675">
    <property type="entry name" value="LRR_dom_sf"/>
</dbReference>
<dbReference type="InterPro" id="IPR041101">
    <property type="entry name" value="Transp_inhibit"/>
</dbReference>
<dbReference type="PANTHER" id="PTHR16134:SF119">
    <property type="entry name" value="AT02038P-RELATED"/>
    <property type="match status" value="1"/>
</dbReference>
<dbReference type="PANTHER" id="PTHR16134">
    <property type="entry name" value="F-BOX/TPR REPEAT PROTEIN POF3"/>
    <property type="match status" value="1"/>
</dbReference>
<dbReference type="Pfam" id="PF18511">
    <property type="entry name" value="F-box_5"/>
    <property type="match status" value="1"/>
</dbReference>
<dbReference type="Pfam" id="PF18791">
    <property type="entry name" value="Transp_inhibit"/>
    <property type="match status" value="1"/>
</dbReference>
<dbReference type="SMART" id="SM00367">
    <property type="entry name" value="LRR_CC"/>
    <property type="match status" value="5"/>
</dbReference>
<dbReference type="SUPFAM" id="SSF81383">
    <property type="entry name" value="F-box domain"/>
    <property type="match status" value="1"/>
</dbReference>
<dbReference type="SUPFAM" id="SSF52047">
    <property type="entry name" value="RNI-like"/>
    <property type="match status" value="1"/>
</dbReference>
<sequence>MGGEAPEARRLDRAMSFGGAGSIPEEALHLVLGYVDDPRDREAVSLVCRRWHRIDALTRKHVTVPFCYAASPAHLLARFPRLESLAVKGKPRAAMYGLIPEDWGAYARPWVAELAAPLECLKALHLRRMVVTDDDLAALVRARGHMLQELKLDKCSGFSTDALRLVARSCRSLRTLFLEECSIADNGTEWLHDLAVNNPVLETLNFHMTELTVVPADLELLAKKCKSLISLKISDCDFSDLIGFFRMAASLQEFAGGAFIEQGELTKYGNVKFPSRLCSLGLTYMGTNEMPIIFPFSALLKKLDLQYTFLTTEDHCQLIAKCPNLLVLAVRNVIGDRGLGVVADTCKKLQRLRVERGDDDPGLQEEQGGVSQVGLTTVAVGCRELEYIAAYVSDITNGALESIGTFCKNLCDFRLVLLDREERITDLPLDNGVRALLRGCTKLRRFALYLRPGGLSDTGLGYIGQYSGIIQYMLLGNVGETDDGLIRFALGCENLRKLELRSCCFSEQALARAIRSMPSLRYVWVQGYKASKTGHDLMLMARPFWNIEFTPPSSENANRMREDGEPCVDSQAQILAYYSLAGKRSDCPRSVVPLYPA</sequence>